<dbReference type="EC" id="2.8.1.8" evidence="1"/>
<dbReference type="EMBL" id="GG698910">
    <property type="protein sequence ID" value="EEU40447.1"/>
    <property type="molecule type" value="Genomic_DNA"/>
</dbReference>
<dbReference type="RefSeq" id="XP_003046160.1">
    <property type="nucleotide sequence ID" value="XM_003046114.1"/>
</dbReference>
<dbReference type="SMR" id="C7Z527"/>
<dbReference type="FunCoup" id="C7Z527">
    <property type="interactions" value="615"/>
</dbReference>
<dbReference type="STRING" id="660122.C7Z527"/>
<dbReference type="EnsemblFungi" id="NechaT66689">
    <property type="protein sequence ID" value="NechaP66689"/>
    <property type="gene ID" value="NechaG66689"/>
</dbReference>
<dbReference type="GeneID" id="9678266"/>
<dbReference type="KEGG" id="nhe:NECHADRAFT_66689"/>
<dbReference type="VEuPathDB" id="FungiDB:NECHADRAFT_66689"/>
<dbReference type="eggNOG" id="KOG2672">
    <property type="taxonomic scope" value="Eukaryota"/>
</dbReference>
<dbReference type="HOGENOM" id="CLU_033144_0_1_1"/>
<dbReference type="InParanoid" id="C7Z527"/>
<dbReference type="OMA" id="PYCDIDF"/>
<dbReference type="OrthoDB" id="3231at2759"/>
<dbReference type="UniPathway" id="UPA00538">
    <property type="reaction ID" value="UER00593"/>
</dbReference>
<dbReference type="Proteomes" id="UP000005206">
    <property type="component" value="Unassembled WGS sequence"/>
</dbReference>
<dbReference type="GO" id="GO:0005739">
    <property type="term" value="C:mitochondrion"/>
    <property type="evidence" value="ECO:0007669"/>
    <property type="project" value="UniProtKB-SubCell"/>
</dbReference>
<dbReference type="GO" id="GO:0051539">
    <property type="term" value="F:4 iron, 4 sulfur cluster binding"/>
    <property type="evidence" value="ECO:0007669"/>
    <property type="project" value="UniProtKB-UniRule"/>
</dbReference>
<dbReference type="GO" id="GO:0016992">
    <property type="term" value="F:lipoate synthase activity"/>
    <property type="evidence" value="ECO:0007669"/>
    <property type="project" value="UniProtKB-UniRule"/>
</dbReference>
<dbReference type="GO" id="GO:0046872">
    <property type="term" value="F:metal ion binding"/>
    <property type="evidence" value="ECO:0007669"/>
    <property type="project" value="UniProtKB-KW"/>
</dbReference>
<dbReference type="CDD" id="cd01335">
    <property type="entry name" value="Radical_SAM"/>
    <property type="match status" value="1"/>
</dbReference>
<dbReference type="FunFam" id="3.20.20.70:FF:000036">
    <property type="entry name" value="Lipoyl synthase, mitochondrial"/>
    <property type="match status" value="1"/>
</dbReference>
<dbReference type="Gene3D" id="3.20.20.70">
    <property type="entry name" value="Aldolase class I"/>
    <property type="match status" value="1"/>
</dbReference>
<dbReference type="HAMAP" id="MF_00206">
    <property type="entry name" value="Lipoyl_synth"/>
    <property type="match status" value="1"/>
</dbReference>
<dbReference type="InterPro" id="IPR013785">
    <property type="entry name" value="Aldolase_TIM"/>
</dbReference>
<dbReference type="InterPro" id="IPR006638">
    <property type="entry name" value="Elp3/MiaA/NifB-like_rSAM"/>
</dbReference>
<dbReference type="InterPro" id="IPR031691">
    <property type="entry name" value="LIAS_N"/>
</dbReference>
<dbReference type="InterPro" id="IPR003698">
    <property type="entry name" value="Lipoyl_synth"/>
</dbReference>
<dbReference type="InterPro" id="IPR007197">
    <property type="entry name" value="rSAM"/>
</dbReference>
<dbReference type="NCBIfam" id="TIGR00510">
    <property type="entry name" value="lipA"/>
    <property type="match status" value="1"/>
</dbReference>
<dbReference type="NCBIfam" id="NF004019">
    <property type="entry name" value="PRK05481.1"/>
    <property type="match status" value="1"/>
</dbReference>
<dbReference type="NCBIfam" id="NF009544">
    <property type="entry name" value="PRK12928.1"/>
    <property type="match status" value="1"/>
</dbReference>
<dbReference type="PANTHER" id="PTHR10949">
    <property type="entry name" value="LIPOYL SYNTHASE"/>
    <property type="match status" value="1"/>
</dbReference>
<dbReference type="PANTHER" id="PTHR10949:SF0">
    <property type="entry name" value="LIPOYL SYNTHASE, MITOCHONDRIAL"/>
    <property type="match status" value="1"/>
</dbReference>
<dbReference type="Pfam" id="PF16881">
    <property type="entry name" value="LIAS_N"/>
    <property type="match status" value="1"/>
</dbReference>
<dbReference type="Pfam" id="PF04055">
    <property type="entry name" value="Radical_SAM"/>
    <property type="match status" value="1"/>
</dbReference>
<dbReference type="SFLD" id="SFLDF00271">
    <property type="entry name" value="lipoyl_synthase"/>
    <property type="match status" value="1"/>
</dbReference>
<dbReference type="SFLD" id="SFLDG01058">
    <property type="entry name" value="lipoyl_synthase_like"/>
    <property type="match status" value="1"/>
</dbReference>
<dbReference type="SMART" id="SM00729">
    <property type="entry name" value="Elp3"/>
    <property type="match status" value="1"/>
</dbReference>
<dbReference type="SUPFAM" id="SSF102114">
    <property type="entry name" value="Radical SAM enzymes"/>
    <property type="match status" value="1"/>
</dbReference>
<dbReference type="PROSITE" id="PS51918">
    <property type="entry name" value="RADICAL_SAM"/>
    <property type="match status" value="1"/>
</dbReference>
<organism>
    <name type="scientific">Fusarium vanettenii (strain ATCC MYA-4622 / CBS 123669 / FGSC 9596 / NRRL 45880 / 77-13-4)</name>
    <name type="common">Fusarium solani subsp. pisi</name>
    <dbReference type="NCBI Taxonomy" id="660122"/>
    <lineage>
        <taxon>Eukaryota</taxon>
        <taxon>Fungi</taxon>
        <taxon>Dikarya</taxon>
        <taxon>Ascomycota</taxon>
        <taxon>Pezizomycotina</taxon>
        <taxon>Sordariomycetes</taxon>
        <taxon>Hypocreomycetidae</taxon>
        <taxon>Hypocreales</taxon>
        <taxon>Nectriaceae</taxon>
        <taxon>Fusarium</taxon>
        <taxon>Fusarium solani species complex</taxon>
        <taxon>Fusarium vanettenii</taxon>
    </lineage>
</organism>
<proteinExistence type="inferred from homology"/>
<keyword id="KW-0004">4Fe-4S</keyword>
<keyword id="KW-0408">Iron</keyword>
<keyword id="KW-0411">Iron-sulfur</keyword>
<keyword id="KW-0479">Metal-binding</keyword>
<keyword id="KW-0496">Mitochondrion</keyword>
<keyword id="KW-1185">Reference proteome</keyword>
<keyword id="KW-0949">S-adenosyl-L-methionine</keyword>
<keyword id="KW-0808">Transferase</keyword>
<keyword id="KW-0809">Transit peptide</keyword>
<accession>C7Z527</accession>
<gene>
    <name type="ORF">NECHADRAFT_66689</name>
</gene>
<comment type="function">
    <text evidence="1">Catalyzes the radical-mediated insertion of two sulfur atoms into the C-6 and C-8 positions of the octanoyl moiety bound to the lipoyl domains of lipoate-dependent enzymes, thereby converting the octanoylated domains into lipoylated derivatives.</text>
</comment>
<comment type="catalytic activity">
    <reaction evidence="1">
        <text>[[Fe-S] cluster scaffold protein carrying a second [4Fe-4S](2+) cluster] + N(6)-octanoyl-L-lysyl-[protein] + 2 oxidized [2Fe-2S]-[ferredoxin] + 2 S-adenosyl-L-methionine + 4 H(+) = [[Fe-S] cluster scaffold protein] + N(6)-[(R)-dihydrolipoyl]-L-lysyl-[protein] + 4 Fe(3+) + 2 hydrogen sulfide + 2 5'-deoxyadenosine + 2 L-methionine + 2 reduced [2Fe-2S]-[ferredoxin]</text>
        <dbReference type="Rhea" id="RHEA:16585"/>
        <dbReference type="Rhea" id="RHEA-COMP:9928"/>
        <dbReference type="Rhea" id="RHEA-COMP:10000"/>
        <dbReference type="Rhea" id="RHEA-COMP:10001"/>
        <dbReference type="Rhea" id="RHEA-COMP:10475"/>
        <dbReference type="Rhea" id="RHEA-COMP:14568"/>
        <dbReference type="Rhea" id="RHEA-COMP:14569"/>
        <dbReference type="ChEBI" id="CHEBI:15378"/>
        <dbReference type="ChEBI" id="CHEBI:17319"/>
        <dbReference type="ChEBI" id="CHEBI:29034"/>
        <dbReference type="ChEBI" id="CHEBI:29919"/>
        <dbReference type="ChEBI" id="CHEBI:33722"/>
        <dbReference type="ChEBI" id="CHEBI:33737"/>
        <dbReference type="ChEBI" id="CHEBI:33738"/>
        <dbReference type="ChEBI" id="CHEBI:57844"/>
        <dbReference type="ChEBI" id="CHEBI:59789"/>
        <dbReference type="ChEBI" id="CHEBI:78809"/>
        <dbReference type="ChEBI" id="CHEBI:83100"/>
        <dbReference type="EC" id="2.8.1.8"/>
    </reaction>
</comment>
<comment type="cofactor">
    <cofactor evidence="1">
        <name>[4Fe-4S] cluster</name>
        <dbReference type="ChEBI" id="CHEBI:49883"/>
    </cofactor>
    <text evidence="1">Binds 2 [4Fe-4S] clusters per subunit. One cluster is coordinated with 3 cysteines and an exchangeable S-adenosyl-L-methionine.</text>
</comment>
<comment type="pathway">
    <text evidence="1">Protein modification; protein lipoylation via endogenous pathway; protein N(6)-(lipoyl)lysine from octanoyl-[acyl-carrier-protein]: step 2/2.</text>
</comment>
<comment type="subcellular location">
    <subcellularLocation>
        <location evidence="1">Mitochondrion</location>
    </subcellularLocation>
</comment>
<comment type="similarity">
    <text evidence="1">Belongs to the radical SAM superfamily. Lipoyl synthase family.</text>
</comment>
<sequence length="412" mass="45389">MASIAPSLKRAHAPLRKALTASSTIRAFATVPPTSSETTKPKRKSYFKDTTVAEFSDFLATSSPAQPLSPAEAFTLRTAEVGPEGKKRTITRLPEWLKTPIPAGNDNFKSIKKDLRGLGLHTVCEEARCPNISECWGGSDKNAATATIMLMGDTCTRGCRFCSVKTNRKPAALDPHEPENTAEALARWGLGYVVLTSVDRDDLADGGAHHFAETIRRIKQKKPSLLVEALTGDFRGDLDMVKVVAESGLDVYAHNVETVEDLTPYVRDRRATFRQSLSVLKHVKEVKGKEGIITKTSLMLGLGEQEHEVMAALEDLRKADVDVVTFGQYMRPTKRHLKVEKYVTPDEFEMWNKRALDMGFLYCASGPLVRSSYKAGEAFIENVLRKRSGEKAMARGTLAKAVALDSETRSSI</sequence>
<reference key="1">
    <citation type="journal article" date="2009" name="PLoS Genet.">
        <title>The genome of Nectria haematococca: contribution of supernumerary chromosomes to gene expansion.</title>
        <authorList>
            <person name="Coleman J.J."/>
            <person name="Rounsley S.D."/>
            <person name="Rodriguez-Carres M."/>
            <person name="Kuo A."/>
            <person name="Wasmann C.C."/>
            <person name="Grimwood J."/>
            <person name="Schmutz J."/>
            <person name="Taga M."/>
            <person name="White G.J."/>
            <person name="Zhou S."/>
            <person name="Schwartz D.C."/>
            <person name="Freitag M."/>
            <person name="Ma L.-J."/>
            <person name="Danchin E.G.J."/>
            <person name="Henrissat B."/>
            <person name="Coutinho P.M."/>
            <person name="Nelson D.R."/>
            <person name="Straney D."/>
            <person name="Napoli C.A."/>
            <person name="Barker B.M."/>
            <person name="Gribskov M."/>
            <person name="Rep M."/>
            <person name="Kroken S."/>
            <person name="Molnar I."/>
            <person name="Rensing C."/>
            <person name="Kennell J.C."/>
            <person name="Zamora J."/>
            <person name="Farman M.L."/>
            <person name="Selker E.U."/>
            <person name="Salamov A."/>
            <person name="Shapiro H."/>
            <person name="Pangilinan J."/>
            <person name="Lindquist E."/>
            <person name="Lamers C."/>
            <person name="Grigoriev I.V."/>
            <person name="Geiser D.M."/>
            <person name="Covert S.F."/>
            <person name="Temporini E."/>
            <person name="VanEtten H.D."/>
        </authorList>
    </citation>
    <scope>NUCLEOTIDE SEQUENCE [LARGE SCALE GENOMIC DNA]</scope>
    <source>
        <strain>ATCC MYA-4622 / CBS 123669 / FGSC 9596 / NRRL 45880 / 77-13-4</strain>
    </source>
</reference>
<name>LIPA_FUSV7</name>
<feature type="transit peptide" description="Mitochondrion" evidence="1">
    <location>
        <begin position="1"/>
        <end position="28"/>
    </location>
</feature>
<feature type="chain" id="PRO_0000398273" description="Lipoyl synthase, mitochondrial">
    <location>
        <begin position="29"/>
        <end position="412"/>
    </location>
</feature>
<feature type="domain" description="Radical SAM core" evidence="2">
    <location>
        <begin position="138"/>
        <end position="361"/>
    </location>
</feature>
<feature type="binding site" evidence="1">
    <location>
        <position position="124"/>
    </location>
    <ligand>
        <name>[4Fe-4S] cluster</name>
        <dbReference type="ChEBI" id="CHEBI:49883"/>
        <label>1</label>
    </ligand>
</feature>
<feature type="binding site" evidence="1">
    <location>
        <position position="129"/>
    </location>
    <ligand>
        <name>[4Fe-4S] cluster</name>
        <dbReference type="ChEBI" id="CHEBI:49883"/>
        <label>1</label>
    </ligand>
</feature>
<feature type="binding site" evidence="1">
    <location>
        <position position="135"/>
    </location>
    <ligand>
        <name>[4Fe-4S] cluster</name>
        <dbReference type="ChEBI" id="CHEBI:49883"/>
        <label>1</label>
    </ligand>
</feature>
<feature type="binding site" evidence="1">
    <location>
        <position position="155"/>
    </location>
    <ligand>
        <name>[4Fe-4S] cluster</name>
        <dbReference type="ChEBI" id="CHEBI:49883"/>
        <label>2</label>
        <note>4Fe-4S-S-AdoMet</note>
    </ligand>
</feature>
<feature type="binding site" evidence="1">
    <location>
        <position position="159"/>
    </location>
    <ligand>
        <name>[4Fe-4S] cluster</name>
        <dbReference type="ChEBI" id="CHEBI:49883"/>
        <label>2</label>
        <note>4Fe-4S-S-AdoMet</note>
    </ligand>
</feature>
<feature type="binding site" evidence="1">
    <location>
        <position position="162"/>
    </location>
    <ligand>
        <name>[4Fe-4S] cluster</name>
        <dbReference type="ChEBI" id="CHEBI:49883"/>
        <label>2</label>
        <note>4Fe-4S-S-AdoMet</note>
    </ligand>
</feature>
<feature type="binding site" evidence="1">
    <location>
        <position position="372"/>
    </location>
    <ligand>
        <name>[4Fe-4S] cluster</name>
        <dbReference type="ChEBI" id="CHEBI:49883"/>
        <label>1</label>
    </ligand>
</feature>
<evidence type="ECO:0000255" key="1">
    <source>
        <dbReference type="HAMAP-Rule" id="MF_03123"/>
    </source>
</evidence>
<evidence type="ECO:0000255" key="2">
    <source>
        <dbReference type="PROSITE-ProRule" id="PRU01266"/>
    </source>
</evidence>
<protein>
    <recommendedName>
        <fullName evidence="1">Lipoyl synthase, mitochondrial</fullName>
        <ecNumber evidence="1">2.8.1.8</ecNumber>
    </recommendedName>
    <alternativeName>
        <fullName evidence="1">Lipoate synthase</fullName>
        <shortName evidence="1">LS</shortName>
        <shortName evidence="1">Lip-syn</shortName>
    </alternativeName>
    <alternativeName>
        <fullName evidence="1">Lipoic acid synthase</fullName>
    </alternativeName>
</protein>